<comment type="function">
    <text evidence="1">Catalyzes the transfer of a dimethylallyl group onto the adenine at position 37 in tRNAs that read codons beginning with uridine, leading to the formation of N6-(dimethylallyl)adenosine (i(6)A).</text>
</comment>
<comment type="catalytic activity">
    <reaction evidence="1">
        <text>adenosine(37) in tRNA + dimethylallyl diphosphate = N(6)-dimethylallyladenosine(37) in tRNA + diphosphate</text>
        <dbReference type="Rhea" id="RHEA:26482"/>
        <dbReference type="Rhea" id="RHEA-COMP:10162"/>
        <dbReference type="Rhea" id="RHEA-COMP:10375"/>
        <dbReference type="ChEBI" id="CHEBI:33019"/>
        <dbReference type="ChEBI" id="CHEBI:57623"/>
        <dbReference type="ChEBI" id="CHEBI:74411"/>
        <dbReference type="ChEBI" id="CHEBI:74415"/>
        <dbReference type="EC" id="2.5.1.75"/>
    </reaction>
</comment>
<comment type="cofactor">
    <cofactor evidence="1">
        <name>Mg(2+)</name>
        <dbReference type="ChEBI" id="CHEBI:18420"/>
    </cofactor>
</comment>
<comment type="subunit">
    <text evidence="1">Monomer.</text>
</comment>
<comment type="similarity">
    <text evidence="1">Belongs to the IPP transferase family.</text>
</comment>
<organism>
    <name type="scientific">Polynucleobacter necessarius subsp. necessarius (strain STIR1)</name>
    <dbReference type="NCBI Taxonomy" id="452638"/>
    <lineage>
        <taxon>Bacteria</taxon>
        <taxon>Pseudomonadati</taxon>
        <taxon>Pseudomonadota</taxon>
        <taxon>Betaproteobacteria</taxon>
        <taxon>Burkholderiales</taxon>
        <taxon>Burkholderiaceae</taxon>
        <taxon>Polynucleobacter</taxon>
    </lineage>
</organism>
<keyword id="KW-0067">ATP-binding</keyword>
<keyword id="KW-0460">Magnesium</keyword>
<keyword id="KW-0547">Nucleotide-binding</keyword>
<keyword id="KW-0808">Transferase</keyword>
<keyword id="KW-0819">tRNA processing</keyword>
<gene>
    <name evidence="1" type="primary">miaA</name>
    <name type="ordered locus">Pnec_1475</name>
</gene>
<feature type="chain" id="PRO_0000377264" description="tRNA dimethylallyltransferase">
    <location>
        <begin position="1"/>
        <end position="334"/>
    </location>
</feature>
<feature type="region of interest" description="Interaction with substrate tRNA" evidence="1">
    <location>
        <begin position="53"/>
        <end position="56"/>
    </location>
</feature>
<feature type="region of interest" description="Interaction with substrate tRNA" evidence="1">
    <location>
        <begin position="177"/>
        <end position="181"/>
    </location>
</feature>
<feature type="binding site" evidence="1">
    <location>
        <begin position="23"/>
        <end position="30"/>
    </location>
    <ligand>
        <name>ATP</name>
        <dbReference type="ChEBI" id="CHEBI:30616"/>
    </ligand>
</feature>
<feature type="binding site" evidence="1">
    <location>
        <begin position="25"/>
        <end position="30"/>
    </location>
    <ligand>
        <name>substrate</name>
    </ligand>
</feature>
<feature type="site" description="Interaction with substrate tRNA" evidence="1">
    <location>
        <position position="119"/>
    </location>
</feature>
<feature type="site" description="Interaction with substrate tRNA" evidence="1">
    <location>
        <position position="141"/>
    </location>
</feature>
<protein>
    <recommendedName>
        <fullName evidence="1">tRNA dimethylallyltransferase</fullName>
        <ecNumber evidence="1">2.5.1.75</ecNumber>
    </recommendedName>
    <alternativeName>
        <fullName evidence="1">Dimethylallyl diphosphate:tRNA dimethylallyltransferase</fullName>
        <shortName evidence="1">DMAPP:tRNA dimethylallyltransferase</shortName>
        <shortName evidence="1">DMATase</shortName>
    </alternativeName>
    <alternativeName>
        <fullName evidence="1">Isopentenyl-diphosphate:tRNA isopentenyltransferase</fullName>
        <shortName evidence="1">IPP transferase</shortName>
        <shortName evidence="1">IPPT</shortName>
        <shortName evidence="1">IPTase</shortName>
    </alternativeName>
</protein>
<proteinExistence type="inferred from homology"/>
<reference key="1">
    <citation type="journal article" date="2013" name="Proc. Natl. Acad. Sci. U.S.A.">
        <title>Polynucleobacter necessarius, a model for genome reduction in both free-living and symbiotic bacteria.</title>
        <authorList>
            <person name="Boscaro V."/>
            <person name="Felletti M."/>
            <person name="Vannini C."/>
            <person name="Ackerman M.S."/>
            <person name="Chain P.S."/>
            <person name="Malfatti S."/>
            <person name="Vergez L.M."/>
            <person name="Shin M."/>
            <person name="Doak T.G."/>
            <person name="Lynch M."/>
            <person name="Petroni G."/>
        </authorList>
    </citation>
    <scope>NUCLEOTIDE SEQUENCE [LARGE SCALE GENOMIC DNA]</scope>
    <source>
        <strain>STIR1</strain>
    </source>
</reference>
<sequence>MPTEPYIQPMHVLNEAPILCIVGPTGAGKTHLAMSLAEHAKSIGLTIELISMDSALVYRGLDIGSAKPTKAEQDAFIHHLIDIIDPTEVYSAARFANDAKRLCLEIRERGNVPVVVGGTMLYWRAWAHGLSSLPPANSEIRARLDEEGKSIGWPAMHDKLAKVDPETAARLKPNDSQRVQRALEVFEIIGKPMSVLLADSPSEDGREGSAIPSWIDLISLEPRDRKRLHLNLEKRFDEMLTAEFMNEVKALHANTRLHTDLPAIRSVGYRQAWEFLNGEIDAEQMRYKALVATRQLGKRQLTWLRAIEGRKTFDPFNPEELKAALDYCKSNLKK</sequence>
<evidence type="ECO:0000255" key="1">
    <source>
        <dbReference type="HAMAP-Rule" id="MF_00185"/>
    </source>
</evidence>
<dbReference type="EC" id="2.5.1.75" evidence="1"/>
<dbReference type="EMBL" id="CP001010">
    <property type="protein sequence ID" value="ACB44568.1"/>
    <property type="molecule type" value="Genomic_DNA"/>
</dbReference>
<dbReference type="SMR" id="B1XRT3"/>
<dbReference type="STRING" id="452638.Pnec_1475"/>
<dbReference type="KEGG" id="pne:Pnec_1475"/>
<dbReference type="eggNOG" id="COG0324">
    <property type="taxonomic scope" value="Bacteria"/>
</dbReference>
<dbReference type="HOGENOM" id="CLU_032616_0_0_4"/>
<dbReference type="OrthoDB" id="9776390at2"/>
<dbReference type="GO" id="GO:0005524">
    <property type="term" value="F:ATP binding"/>
    <property type="evidence" value="ECO:0007669"/>
    <property type="project" value="UniProtKB-UniRule"/>
</dbReference>
<dbReference type="GO" id="GO:0016887">
    <property type="term" value="F:ATP hydrolysis activity"/>
    <property type="evidence" value="ECO:0007669"/>
    <property type="project" value="InterPro"/>
</dbReference>
<dbReference type="GO" id="GO:0052381">
    <property type="term" value="F:tRNA dimethylallyltransferase activity"/>
    <property type="evidence" value="ECO:0007669"/>
    <property type="project" value="UniProtKB-UniRule"/>
</dbReference>
<dbReference type="GO" id="GO:0006400">
    <property type="term" value="P:tRNA modification"/>
    <property type="evidence" value="ECO:0007669"/>
    <property type="project" value="TreeGrafter"/>
</dbReference>
<dbReference type="CDD" id="cd00009">
    <property type="entry name" value="AAA"/>
    <property type="match status" value="1"/>
</dbReference>
<dbReference type="FunFam" id="1.10.20.140:FF:000001">
    <property type="entry name" value="tRNA dimethylallyltransferase"/>
    <property type="match status" value="1"/>
</dbReference>
<dbReference type="Gene3D" id="1.10.20.140">
    <property type="match status" value="1"/>
</dbReference>
<dbReference type="Gene3D" id="3.40.50.300">
    <property type="entry name" value="P-loop containing nucleotide triphosphate hydrolases"/>
    <property type="match status" value="1"/>
</dbReference>
<dbReference type="HAMAP" id="MF_00185">
    <property type="entry name" value="IPP_trans"/>
    <property type="match status" value="1"/>
</dbReference>
<dbReference type="InterPro" id="IPR003593">
    <property type="entry name" value="AAA+_ATPase"/>
</dbReference>
<dbReference type="InterPro" id="IPR039657">
    <property type="entry name" value="Dimethylallyltransferase"/>
</dbReference>
<dbReference type="InterPro" id="IPR018022">
    <property type="entry name" value="IPT"/>
</dbReference>
<dbReference type="InterPro" id="IPR027417">
    <property type="entry name" value="P-loop_NTPase"/>
</dbReference>
<dbReference type="NCBIfam" id="TIGR00174">
    <property type="entry name" value="miaA"/>
    <property type="match status" value="1"/>
</dbReference>
<dbReference type="PANTHER" id="PTHR11088">
    <property type="entry name" value="TRNA DIMETHYLALLYLTRANSFERASE"/>
    <property type="match status" value="1"/>
</dbReference>
<dbReference type="PANTHER" id="PTHR11088:SF60">
    <property type="entry name" value="TRNA DIMETHYLALLYLTRANSFERASE"/>
    <property type="match status" value="1"/>
</dbReference>
<dbReference type="Pfam" id="PF01715">
    <property type="entry name" value="IPPT"/>
    <property type="match status" value="1"/>
</dbReference>
<dbReference type="SMART" id="SM00382">
    <property type="entry name" value="AAA"/>
    <property type="match status" value="1"/>
</dbReference>
<dbReference type="SUPFAM" id="SSF52540">
    <property type="entry name" value="P-loop containing nucleoside triphosphate hydrolases"/>
    <property type="match status" value="1"/>
</dbReference>
<name>MIAA_POLNS</name>
<accession>B1XRT3</accession>